<accession>Q6NS38</accession>
<accession>A4PET2</accession>
<accession>Q5XLE3</accession>
<evidence type="ECO:0000255" key="1">
    <source>
        <dbReference type="PROSITE-ProRule" id="PRU00805"/>
    </source>
</evidence>
<evidence type="ECO:0000256" key="2">
    <source>
        <dbReference type="SAM" id="MobiDB-lite"/>
    </source>
</evidence>
<evidence type="ECO:0000269" key="3">
    <source>
    </source>
</evidence>
<evidence type="ECO:0000269" key="4">
    <source>
    </source>
</evidence>
<evidence type="ECO:0000269" key="5">
    <source>
    </source>
</evidence>
<evidence type="ECO:0000269" key="6">
    <source>
    </source>
</evidence>
<evidence type="ECO:0000269" key="7">
    <source>
    </source>
</evidence>
<evidence type="ECO:0000269" key="8">
    <source>
    </source>
</evidence>
<evidence type="ECO:0000269" key="9">
    <source>
    </source>
</evidence>
<evidence type="ECO:0000269" key="10">
    <source>
    </source>
</evidence>
<evidence type="ECO:0000269" key="11">
    <source>
    </source>
</evidence>
<evidence type="ECO:0000269" key="12">
    <source>
    </source>
</evidence>
<evidence type="ECO:0000269" key="13">
    <source>
    </source>
</evidence>
<evidence type="ECO:0000303" key="14">
    <source>
    </source>
</evidence>
<evidence type="ECO:0000303" key="15">
    <source>
    </source>
</evidence>
<evidence type="ECO:0000305" key="16"/>
<evidence type="ECO:0000305" key="17">
    <source>
    </source>
</evidence>
<evidence type="ECO:0000305" key="18">
    <source>
    </source>
</evidence>
<evidence type="ECO:0000305" key="19">
    <source>
    </source>
</evidence>
<evidence type="ECO:0000305" key="20">
    <source>
    </source>
</evidence>
<evidence type="ECO:0000305" key="21">
    <source>
    </source>
</evidence>
<evidence type="ECO:0000305" key="22">
    <source>
    </source>
</evidence>
<evidence type="ECO:0007829" key="23">
    <source>
        <dbReference type="PDB" id="3RZG"/>
    </source>
</evidence>
<evidence type="ECO:0007829" key="24">
    <source>
        <dbReference type="PDB" id="3S57"/>
    </source>
</evidence>
<organism>
    <name type="scientific">Homo sapiens</name>
    <name type="common">Human</name>
    <dbReference type="NCBI Taxonomy" id="9606"/>
    <lineage>
        <taxon>Eukaryota</taxon>
        <taxon>Metazoa</taxon>
        <taxon>Chordata</taxon>
        <taxon>Craniata</taxon>
        <taxon>Vertebrata</taxon>
        <taxon>Euteleostomi</taxon>
        <taxon>Mammalia</taxon>
        <taxon>Eutheria</taxon>
        <taxon>Euarchontoglires</taxon>
        <taxon>Primates</taxon>
        <taxon>Haplorrhini</taxon>
        <taxon>Catarrhini</taxon>
        <taxon>Hominidae</taxon>
        <taxon>Homo</taxon>
    </lineage>
</organism>
<sequence length="261" mass="29322">MDRFLVKGAQGGLLRKQEEQEPTGEEPAVLGGDKESTRKRPRREAPGNGGHSAGPSWRHIRAEGLDCSYTVLFGKAEADEIFQELEKEVEYFTGALARVQVFGKWHSVPRKQATYGDAGLTYTFSGLTLSPKPWIPVLERIRDHVSGVTGQTFNFVLINRYKDGCDHIGEHRDDERELAPGSPIASVSFGACRDFVFRHKDSRGKSPSRRVAVVRLPLAHGSLLMMNHPTNTHWYHSLPVRKKVLAPRVNLTFRKILLTKK</sequence>
<proteinExistence type="evidence at protein level"/>
<reference key="1">
    <citation type="submission" date="2004-09" db="EMBL/GenBank/DDBJ databases">
        <title>Cloning and expression of human 2OG-Fe(II) oxy DC1.</title>
        <authorList>
            <person name="Lin Y."/>
            <person name="Xie Y."/>
            <person name="Mao Y."/>
        </authorList>
    </citation>
    <scope>NUCLEOTIDE SEQUENCE [MRNA] (ISOFORM 1)</scope>
</reference>
<reference key="2">
    <citation type="journal article" date="2007" name="J. Cell. Mol. Med.">
        <title>Expression and sub-cellular localization of human ABH family molecules.</title>
        <authorList>
            <person name="Tsujikawa K."/>
            <person name="Koike K."/>
            <person name="Kitae K."/>
            <person name="Shinkawa A."/>
            <person name="Arima H."/>
            <person name="Suzuki T."/>
            <person name="Tsuchiya M."/>
            <person name="Makino Y."/>
            <person name="Furukawa T."/>
            <person name="Konishi N."/>
            <person name="Yamamoto H."/>
        </authorList>
    </citation>
    <scope>NUCLEOTIDE SEQUENCE [MRNA] (ISOFORM 2)</scope>
    <source>
        <tissue>Testis</tissue>
    </source>
</reference>
<reference key="3">
    <citation type="journal article" date="2006" name="Nature">
        <title>The finished DNA sequence of human chromosome 12.</title>
        <authorList>
            <person name="Scherer S.E."/>
            <person name="Muzny D.M."/>
            <person name="Buhay C.J."/>
            <person name="Chen R."/>
            <person name="Cree A."/>
            <person name="Ding Y."/>
            <person name="Dugan-Rocha S."/>
            <person name="Gill R."/>
            <person name="Gunaratne P."/>
            <person name="Harris R.A."/>
            <person name="Hawes A.C."/>
            <person name="Hernandez J."/>
            <person name="Hodgson A.V."/>
            <person name="Hume J."/>
            <person name="Jackson A."/>
            <person name="Khan Z.M."/>
            <person name="Kovar-Smith C."/>
            <person name="Lewis L.R."/>
            <person name="Lozado R.J."/>
            <person name="Metzker M.L."/>
            <person name="Milosavljevic A."/>
            <person name="Miner G.R."/>
            <person name="Montgomery K.T."/>
            <person name="Morgan M.B."/>
            <person name="Nazareth L.V."/>
            <person name="Scott G."/>
            <person name="Sodergren E."/>
            <person name="Song X.-Z."/>
            <person name="Steffen D."/>
            <person name="Lovering R.C."/>
            <person name="Wheeler D.A."/>
            <person name="Worley K.C."/>
            <person name="Yuan Y."/>
            <person name="Zhang Z."/>
            <person name="Adams C.Q."/>
            <person name="Ansari-Lari M.A."/>
            <person name="Ayele M."/>
            <person name="Brown M.J."/>
            <person name="Chen G."/>
            <person name="Chen Z."/>
            <person name="Clerc-Blankenburg K.P."/>
            <person name="Davis C."/>
            <person name="Delgado O."/>
            <person name="Dinh H.H."/>
            <person name="Draper H."/>
            <person name="Gonzalez-Garay M.L."/>
            <person name="Havlak P."/>
            <person name="Jackson L.R."/>
            <person name="Jacob L.S."/>
            <person name="Kelly S.H."/>
            <person name="Li L."/>
            <person name="Li Z."/>
            <person name="Liu J."/>
            <person name="Liu W."/>
            <person name="Lu J."/>
            <person name="Maheshwari M."/>
            <person name="Nguyen B.-V."/>
            <person name="Okwuonu G.O."/>
            <person name="Pasternak S."/>
            <person name="Perez L.M."/>
            <person name="Plopper F.J.H."/>
            <person name="Santibanez J."/>
            <person name="Shen H."/>
            <person name="Tabor P.E."/>
            <person name="Verduzco D."/>
            <person name="Waldron L."/>
            <person name="Wang Q."/>
            <person name="Williams G.A."/>
            <person name="Zhang J."/>
            <person name="Zhou J."/>
            <person name="Allen C.C."/>
            <person name="Amin A.G."/>
            <person name="Anyalebechi V."/>
            <person name="Bailey M."/>
            <person name="Barbaria J.A."/>
            <person name="Bimage K.E."/>
            <person name="Bryant N.P."/>
            <person name="Burch P.E."/>
            <person name="Burkett C.E."/>
            <person name="Burrell K.L."/>
            <person name="Calderon E."/>
            <person name="Cardenas V."/>
            <person name="Carter K."/>
            <person name="Casias K."/>
            <person name="Cavazos I."/>
            <person name="Cavazos S.R."/>
            <person name="Ceasar H."/>
            <person name="Chacko J."/>
            <person name="Chan S.N."/>
            <person name="Chavez D."/>
            <person name="Christopoulos C."/>
            <person name="Chu J."/>
            <person name="Cockrell R."/>
            <person name="Cox C.D."/>
            <person name="Dang M."/>
            <person name="Dathorne S.R."/>
            <person name="David R."/>
            <person name="Davis C.M."/>
            <person name="Davy-Carroll L."/>
            <person name="Deshazo D.R."/>
            <person name="Donlin J.E."/>
            <person name="D'Souza L."/>
            <person name="Eaves K.A."/>
            <person name="Egan A."/>
            <person name="Emery-Cohen A.J."/>
            <person name="Escotto M."/>
            <person name="Flagg N."/>
            <person name="Forbes L.D."/>
            <person name="Gabisi A.M."/>
            <person name="Garza M."/>
            <person name="Hamilton C."/>
            <person name="Henderson N."/>
            <person name="Hernandez O."/>
            <person name="Hines S."/>
            <person name="Hogues M.E."/>
            <person name="Huang M."/>
            <person name="Idlebird D.G."/>
            <person name="Johnson R."/>
            <person name="Jolivet A."/>
            <person name="Jones S."/>
            <person name="Kagan R."/>
            <person name="King L.M."/>
            <person name="Leal B."/>
            <person name="Lebow H."/>
            <person name="Lee S."/>
            <person name="LeVan J.M."/>
            <person name="Lewis L.C."/>
            <person name="London P."/>
            <person name="Lorensuhewa L.M."/>
            <person name="Loulseged H."/>
            <person name="Lovett D.A."/>
            <person name="Lucier A."/>
            <person name="Lucier R.L."/>
            <person name="Ma J."/>
            <person name="Madu R.C."/>
            <person name="Mapua P."/>
            <person name="Martindale A.D."/>
            <person name="Martinez E."/>
            <person name="Massey E."/>
            <person name="Mawhiney S."/>
            <person name="Meador M.G."/>
            <person name="Mendez S."/>
            <person name="Mercado C."/>
            <person name="Mercado I.C."/>
            <person name="Merritt C.E."/>
            <person name="Miner Z.L."/>
            <person name="Minja E."/>
            <person name="Mitchell T."/>
            <person name="Mohabbat F."/>
            <person name="Mohabbat K."/>
            <person name="Montgomery B."/>
            <person name="Moore N."/>
            <person name="Morris S."/>
            <person name="Munidasa M."/>
            <person name="Ngo R.N."/>
            <person name="Nguyen N.B."/>
            <person name="Nickerson E."/>
            <person name="Nwaokelemeh O.O."/>
            <person name="Nwokenkwo S."/>
            <person name="Obregon M."/>
            <person name="Oguh M."/>
            <person name="Oragunye N."/>
            <person name="Oviedo R.J."/>
            <person name="Parish B.J."/>
            <person name="Parker D.N."/>
            <person name="Parrish J."/>
            <person name="Parks K.L."/>
            <person name="Paul H.A."/>
            <person name="Payton B.A."/>
            <person name="Perez A."/>
            <person name="Perrin W."/>
            <person name="Pickens A."/>
            <person name="Primus E.L."/>
            <person name="Pu L.-L."/>
            <person name="Puazo M."/>
            <person name="Quiles M.M."/>
            <person name="Quiroz J.B."/>
            <person name="Rabata D."/>
            <person name="Reeves K."/>
            <person name="Ruiz S.J."/>
            <person name="Shao H."/>
            <person name="Sisson I."/>
            <person name="Sonaike T."/>
            <person name="Sorelle R.P."/>
            <person name="Sutton A.E."/>
            <person name="Svatek A.F."/>
            <person name="Svetz L.A."/>
            <person name="Tamerisa K.S."/>
            <person name="Taylor T.R."/>
            <person name="Teague B."/>
            <person name="Thomas N."/>
            <person name="Thorn R.D."/>
            <person name="Trejos Z.Y."/>
            <person name="Trevino B.K."/>
            <person name="Ukegbu O.N."/>
            <person name="Urban J.B."/>
            <person name="Vasquez L.I."/>
            <person name="Vera V.A."/>
            <person name="Villasana D.M."/>
            <person name="Wang L."/>
            <person name="Ward-Moore S."/>
            <person name="Warren J.T."/>
            <person name="Wei X."/>
            <person name="White F."/>
            <person name="Williamson A.L."/>
            <person name="Wleczyk R."/>
            <person name="Wooden H.S."/>
            <person name="Wooden S.H."/>
            <person name="Yen J."/>
            <person name="Yoon L."/>
            <person name="Yoon V."/>
            <person name="Zorrilla S.E."/>
            <person name="Nelson D."/>
            <person name="Kucherlapati R."/>
            <person name="Weinstock G."/>
            <person name="Gibbs R.A."/>
        </authorList>
    </citation>
    <scope>NUCLEOTIDE SEQUENCE [LARGE SCALE GENOMIC DNA]</scope>
</reference>
<reference key="4">
    <citation type="journal article" date="2004" name="Genome Res.">
        <title>The status, quality, and expansion of the NIH full-length cDNA project: the Mammalian Gene Collection (MGC).</title>
        <authorList>
            <consortium name="The MGC Project Team"/>
        </authorList>
    </citation>
    <scope>NUCLEOTIDE SEQUENCE [LARGE SCALE MRNA] (ISOFORM 1)</scope>
    <source>
        <tissue>Skin</tissue>
    </source>
</reference>
<reference key="5">
    <citation type="journal article" date="2002" name="Proc. Natl. Acad. Sci. U.S.A.">
        <title>Reversal of DNA alkylation damage by two human dioxygenases.</title>
        <authorList>
            <person name="Duncan T."/>
            <person name="Trewick S.C."/>
            <person name="Koivisto P."/>
            <person name="Bates P.A."/>
            <person name="Lindahl T."/>
            <person name="Sedgwick B."/>
        </authorList>
    </citation>
    <scope>FUNCTION</scope>
    <scope>CATALYTIC ACTIVITY</scope>
    <scope>ACTIVITY REGULATION</scope>
    <scope>SUBCELLULAR LOCATION</scope>
    <scope>TISSUE SPECIFICITY</scope>
</reference>
<reference key="6">
    <citation type="journal article" date="2003" name="Nature">
        <title>Human and bacterial oxidative demethylases repair alkylation damage in both RNA and DNA.</title>
        <authorList>
            <person name="Aas P.A."/>
            <person name="Otterlei M."/>
            <person name="Falnes P.O."/>
            <person name="Vaagboe C.B."/>
            <person name="Skorpen F."/>
            <person name="Akbari M."/>
            <person name="Sundheim O."/>
            <person name="Bjoeraas M."/>
            <person name="Slupphaug G."/>
            <person name="Seeberg E."/>
            <person name="Krokan H.E."/>
        </authorList>
    </citation>
    <scope>FUNCTION</scope>
    <scope>SUBCELLULAR LOCATION</scope>
</reference>
<reference key="7">
    <citation type="journal article" date="2005" name="J. Biol. Chem.">
        <title>Repair of methylation damage in DNA and RNA by mammalian AlkB homologues.</title>
        <authorList>
            <person name="Lee D.-H."/>
            <person name="Jin S.-G."/>
            <person name="Cai S."/>
            <person name="Chen Y."/>
            <person name="Pfeifer G.P."/>
            <person name="O'Connor T.R."/>
        </authorList>
    </citation>
    <scope>FUNCTION</scope>
    <scope>CATALYTIC ACTIVITY</scope>
    <scope>BIOPHYSICOCHEMICAL PROPERTIES</scope>
    <scope>MUTAGENESIS OF ASP-173 AND HIS-236</scope>
    <scope>TISSUE SPECIFICITY</scope>
</reference>
<reference key="8">
    <citation type="journal article" date="2008" name="Cancer Res.">
        <title>AlkB homologue 2-mediated repair of ethenoadenine lesions in mammalian DNA.</title>
        <authorList>
            <person name="Ringvoll J."/>
            <person name="Moen M.N."/>
            <person name="Nordstrand L.M."/>
            <person name="Meira L.B."/>
            <person name="Pang B."/>
            <person name="Bekkelund A."/>
            <person name="Dedon P.C."/>
            <person name="Bjelland S."/>
            <person name="Samson L.D."/>
            <person name="Falnes P.O."/>
            <person name="Klungland A."/>
        </authorList>
    </citation>
    <scope>FUNCTION</scope>
    <scope>ACTIVITY REGULATION</scope>
    <scope>COFACTOR</scope>
</reference>
<reference key="9">
    <citation type="journal article" date="2009" name="J. Cell Biol.">
        <title>Identification of a novel, widespread, and functionally important PCNA-binding motif.</title>
        <authorList>
            <person name="Gilljam K.M."/>
            <person name="Feyzi E."/>
            <person name="Aas P.A."/>
            <person name="Sousa M.M."/>
            <person name="Mueller R."/>
            <person name="Vaagboe C.B."/>
            <person name="Catterall T.C."/>
            <person name="Liabakk N.B."/>
            <person name="Slupphaug G."/>
            <person name="Drabloes F."/>
            <person name="Krokan H.E."/>
            <person name="Otterlei M."/>
        </authorList>
    </citation>
    <scope>FUNCTION</scope>
    <scope>INTERACTION WITH PCNA</scope>
    <scope>SUBCELLULAR LOCATION</scope>
    <scope>MOTIF</scope>
    <scope>MUTAGENESIS OF ARG-3; PHE-4; 5-LEU-VAL-6 AND LYS-7</scope>
</reference>
<reference key="10">
    <citation type="journal article" date="2010" name="Mol. Biosyst.">
        <title>Mechanistic insight into the recognition of single-stranded and double-stranded DNA substrates by ABH2 and ABH3.</title>
        <authorList>
            <person name="Chen B."/>
            <person name="Liu H."/>
            <person name="Sun X."/>
            <person name="Yang C.G."/>
        </authorList>
    </citation>
    <scope>FUNCTION</scope>
    <scope>CATALYTIC ACTIVITY</scope>
    <scope>MUTAGENESIS OF VAL-101; PHE-102; 101-VAL--GLY-103; ARG-110; TYR-122; PHE-124; SER-125 AND GLU-175</scope>
</reference>
<reference key="11">
    <citation type="journal article" date="2011" name="BMC Syst. Biol.">
        <title>Initial characterization of the human central proteome.</title>
        <authorList>
            <person name="Burkard T.R."/>
            <person name="Planyavsky M."/>
            <person name="Kaupe I."/>
            <person name="Breitwieser F.P."/>
            <person name="Buerckstuemmer T."/>
            <person name="Bennett K.L."/>
            <person name="Superti-Furga G."/>
            <person name="Colinge J."/>
        </authorList>
    </citation>
    <scope>IDENTIFICATION BY MASS SPECTROMETRY [LARGE SCALE ANALYSIS]</scope>
</reference>
<reference key="12">
    <citation type="journal article" date="2013" name="Cell Rep.">
        <title>ABH2 couples regulation of ribosomal DNA transcription with DNA alkylation repair.</title>
        <authorList>
            <person name="Li P."/>
            <person name="Gao S."/>
            <person name="Wang L."/>
            <person name="Yu F."/>
            <person name="Li J."/>
            <person name="Wang C."/>
            <person name="Li J."/>
            <person name="Wong J."/>
        </authorList>
    </citation>
    <scope>FUNCTION</scope>
    <scope>INTERACTION WITH NCL; NPM1; UBTF; PCNA AND XRCC5-XRCC6 COMPLEX</scope>
    <scope>SUBCELLULAR LOCATION</scope>
    <scope>MUTAGENESIS OF 38-ARG--ARG-40 AND ASP-173</scope>
</reference>
<reference key="13">
    <citation type="journal article" date="2015" name="DNA Repair">
        <title>Differential repair of etheno-DNA adducts by bacterial and human AlkB proteins.</title>
        <authorList>
            <person name="Zdzalik D."/>
            <person name="Domanska A."/>
            <person name="Prorok P."/>
            <person name="Kosicki K."/>
            <person name="van den Born E."/>
            <person name="Falnes P.O."/>
            <person name="Rizzo C.J."/>
            <person name="Guengerich F.P."/>
            <person name="Tudek B."/>
        </authorList>
    </citation>
    <scope>FUNCTION</scope>
    <scope>CATALYTIC ACTIVITY</scope>
</reference>
<reference key="14">
    <citation type="journal article" date="2015" name="DNA Repair">
        <title>The interaction between ALKBH2 DNA repair enzyme and PCNA is direct, mediated by the hydrophobic pocket of PCNA and perturbed in naturally-occurring ALKBH2 variants.</title>
        <authorList>
            <person name="Fu D."/>
            <person name="Samson L.D."/>
            <person name="Huebscher U."/>
            <person name="van Loon B."/>
        </authorList>
    </citation>
    <scope>FUNCTION</scope>
    <scope>INTERACTION WITH PCNA</scope>
    <scope>MUTAGENESIS OF PHE-4</scope>
    <scope>VARIANTS VAL-9 AND LYS-10</scope>
</reference>
<reference key="15">
    <citation type="journal article" date="2008" name="Nature">
        <title>Crystal structures of DNA/RNA repair enzymes AlkB and ABH2 bound to dsDNA.</title>
        <authorList>
            <person name="Yang C.G."/>
            <person name="Yi C."/>
            <person name="Duguid E.M."/>
            <person name="Sullivan C.T."/>
            <person name="Jian X."/>
            <person name="Rice P.A."/>
            <person name="He C."/>
        </authorList>
    </citation>
    <scope>X-RAY CRYSTALLOGRAPHY (2.0 ANGSTROMS) OF 56-258 IN COMPLEXES WITH DS-DNA; 2-OXOGLUTARATE AND METAL IONS</scope>
    <scope>FUNCTION</scope>
    <scope>CATALYTIC ACTIVITY</scope>
    <scope>COFACTOR</scope>
</reference>
<reference key="16">
    <citation type="journal article" date="2010" name="Nucleic Acids Res.">
        <title>Structure determination of DNA methylation lesions N1-meA and N3-meC in duplex DNA using a cross-linked protein-DNA system.</title>
        <authorList>
            <person name="Lu L."/>
            <person name="Yi C."/>
            <person name="Jian X."/>
            <person name="Zheng G."/>
            <person name="He C."/>
        </authorList>
    </citation>
    <scope>X-RAY CRYSTALLOGRAPHY (1.77 ANGSTROMS) OF 56-261 IN COMPLEXES WITH DOUBLE-STRANDED DNA CONTAINING N1-METHYLADENINE OR N3-METHYLCYTOSINE</scope>
</reference>
<reference key="17">
    <citation type="journal article" date="2012" name="Nat. Struct. Mol. Biol.">
        <title>Duplex interrogation by a direct DNA repair protein in search of base damage.</title>
        <authorList>
            <person name="Yi C."/>
            <person name="Chen B."/>
            <person name="Qi B."/>
            <person name="Zhang W."/>
            <person name="Jia G."/>
            <person name="Zhang L."/>
            <person name="Li C.J."/>
            <person name="Dinner A.R."/>
            <person name="Yang C.G."/>
            <person name="He C."/>
        </authorList>
    </citation>
    <scope>X-RAY CRYSTALLOGRAPHY (1.60 ANGSTROMS) OF 56-258 IN COMPLEX WITH 2-OXOGLUTARATE AND DOUBLE-STRANDED DNA CONTAINING N3-METHYLCYTOSINE OR 1,N6-ETHENOADENINE</scope>
    <scope>FUNCTION</scope>
    <scope>CATALYTIC ACTIVITY</scope>
    <scope>MUTAGENESIS OF VAL-101 AND PHE-102</scope>
</reference>
<comment type="function">
    <text evidence="3 4 5 6 8 9 10 11 12 13">Dioxygenase that repairs alkylated nucleic acid bases by direct reversal oxidative dealkylation. Can process both double-stranded (ds) and single-stranded (ss) DNA substrates, with a strong preference for dsDNA (PubMed:12486230, PubMed:12594517, PubMed:16174769, PubMed:20714506, PubMed:23972994, PubMed:25797601). Uses molecular oxygen, 2-oxoglutarate and iron as cofactors to oxidize the alkyl groups that are subsequently released as aldehydes, regenerating the undamaged bases. Probes the base pair stability, locates a weakened base pair and flips the damaged base to accommodate the lesion in its active site for efficient catalysis (PubMed:18432238, PubMed:22659876). Repairs monoalkylated bases, specifically N1-methyladenine and N3-methylcytosine, as well as higher order alkyl adducts such as bases modified with exocyclic bridged adducts known as etheno adducts including 1,N6-ethenoadenine, 3,N4-ethenocytosine and 1,N2-ethenoguanine (PubMed:12486230, PubMed:12594517, PubMed:16174769, PubMed:20714506, PubMed:23972994, PubMed:25797601, PubMed:26408825). Acts as a gatekeeper of genomic integrity under alkylation stress. Efficiently repairs alkylated lesions in ribosomal DNA (rDNA). These lesions can cause ss- and dsDNA strand breaks that severely impair rDNA transcription (PubMed:23972994). In a response mechanism to DNA damage, associates with PCNA at replication forks to repair alkylated adducts prior to replication (PubMed:19736315, PubMed:26408825).</text>
</comment>
<comment type="catalytic activity">
    <reaction evidence="3 5 6 9 10">
        <text>a methylated nucleobase within DNA + 2-oxoglutarate + O2 = a nucleobase within DNA + formaldehyde + succinate + CO2</text>
        <dbReference type="Rhea" id="RHEA:30299"/>
        <dbReference type="Rhea" id="RHEA-COMP:12192"/>
        <dbReference type="Rhea" id="RHEA-COMP:12193"/>
        <dbReference type="ChEBI" id="CHEBI:15379"/>
        <dbReference type="ChEBI" id="CHEBI:16526"/>
        <dbReference type="ChEBI" id="CHEBI:16810"/>
        <dbReference type="ChEBI" id="CHEBI:16842"/>
        <dbReference type="ChEBI" id="CHEBI:30031"/>
        <dbReference type="ChEBI" id="CHEBI:32875"/>
        <dbReference type="ChEBI" id="CHEBI:64428"/>
        <dbReference type="EC" id="1.14.11.33"/>
    </reaction>
    <physiologicalReaction direction="left-to-right" evidence="17 18 19 20 21">
        <dbReference type="Rhea" id="RHEA:30300"/>
    </physiologicalReaction>
</comment>
<comment type="catalytic activity">
    <reaction evidence="5 6 9 10">
        <text>an N(1)-methyl-2'-deoxyadenosine in double-stranded DNA + 2-oxoglutarate + O2 = a 2'-deoxyadenosine in double-stranded DNA + formaldehyde + succinate + CO2 + H(+)</text>
        <dbReference type="Rhea" id="RHEA:70443"/>
        <dbReference type="Rhea" id="RHEA-COMP:14236"/>
        <dbReference type="Rhea" id="RHEA-COMP:17897"/>
        <dbReference type="ChEBI" id="CHEBI:15378"/>
        <dbReference type="ChEBI" id="CHEBI:15379"/>
        <dbReference type="ChEBI" id="CHEBI:16526"/>
        <dbReference type="ChEBI" id="CHEBI:16810"/>
        <dbReference type="ChEBI" id="CHEBI:16842"/>
        <dbReference type="ChEBI" id="CHEBI:30031"/>
        <dbReference type="ChEBI" id="CHEBI:90615"/>
        <dbReference type="ChEBI" id="CHEBI:139096"/>
    </reaction>
    <physiologicalReaction direction="left-to-right" evidence="18 19 20 21">
        <dbReference type="Rhea" id="RHEA:70444"/>
    </physiologicalReaction>
</comment>
<comment type="catalytic activity">
    <reaction evidence="3 5 9 10">
        <text>an N(1)-methyl-2'-deoxyadenosine in single-stranded DNA + 2-oxoglutarate + O2 = a 2'-deoxyadenosine in single-stranded DNA + formaldehyde + succinate + CO2 + H(+)</text>
        <dbReference type="Rhea" id="RHEA:70447"/>
        <dbReference type="Rhea" id="RHEA-COMP:17895"/>
        <dbReference type="Rhea" id="RHEA-COMP:17896"/>
        <dbReference type="ChEBI" id="CHEBI:15378"/>
        <dbReference type="ChEBI" id="CHEBI:15379"/>
        <dbReference type="ChEBI" id="CHEBI:16526"/>
        <dbReference type="ChEBI" id="CHEBI:16810"/>
        <dbReference type="ChEBI" id="CHEBI:16842"/>
        <dbReference type="ChEBI" id="CHEBI:30031"/>
        <dbReference type="ChEBI" id="CHEBI:90615"/>
        <dbReference type="ChEBI" id="CHEBI:139096"/>
    </reaction>
    <physiologicalReaction direction="left-to-right" evidence="17 18 20 21">
        <dbReference type="Rhea" id="RHEA:70448"/>
    </physiologicalReaction>
</comment>
<comment type="catalytic activity">
    <reaction evidence="5">
        <text>an N(3)-methyl-2'-deoxycytidine in double-stranded DNA + 2-oxoglutarate + O2 = a 2'-deoxycytidine in double-stranded DNA + formaldehyde + succinate + CO2 + H(+)</text>
        <dbReference type="Rhea" id="RHEA:70439"/>
        <dbReference type="Rhea" id="RHEA-COMP:14237"/>
        <dbReference type="Rhea" id="RHEA-COMP:17070"/>
        <dbReference type="ChEBI" id="CHEBI:15378"/>
        <dbReference type="ChEBI" id="CHEBI:15379"/>
        <dbReference type="ChEBI" id="CHEBI:16526"/>
        <dbReference type="ChEBI" id="CHEBI:16810"/>
        <dbReference type="ChEBI" id="CHEBI:16842"/>
        <dbReference type="ChEBI" id="CHEBI:30031"/>
        <dbReference type="ChEBI" id="CHEBI:85452"/>
        <dbReference type="ChEBI" id="CHEBI:139075"/>
    </reaction>
    <physiologicalReaction direction="left-to-right" evidence="18">
        <dbReference type="Rhea" id="RHEA:70440"/>
    </physiologicalReaction>
</comment>
<comment type="catalytic activity">
    <reaction evidence="3 5">
        <text>an N(3)-methyl-2'-deoxycytidine in single-stranded DNA + 2-oxoglutarate + O2 = a 2'-deoxycytidine in single-stranded DNA + formaldehyde + succinate + CO2 + H(+)</text>
        <dbReference type="Rhea" id="RHEA:70435"/>
        <dbReference type="Rhea" id="RHEA-COMP:12846"/>
        <dbReference type="Rhea" id="RHEA-COMP:17894"/>
        <dbReference type="ChEBI" id="CHEBI:15378"/>
        <dbReference type="ChEBI" id="CHEBI:15379"/>
        <dbReference type="ChEBI" id="CHEBI:16526"/>
        <dbReference type="ChEBI" id="CHEBI:16810"/>
        <dbReference type="ChEBI" id="CHEBI:16842"/>
        <dbReference type="ChEBI" id="CHEBI:30031"/>
        <dbReference type="ChEBI" id="CHEBI:85452"/>
        <dbReference type="ChEBI" id="CHEBI:139075"/>
    </reaction>
    <physiologicalReaction direction="left-to-right" evidence="17 18">
        <dbReference type="Rhea" id="RHEA:70436"/>
    </physiologicalReaction>
</comment>
<comment type="catalytic activity">
    <reaction evidence="12">
        <text>a 1,N(6)-etheno-2'-deoxyadenosine in double-stranded DNA + 2-oxoglutarate + O2 + H2O = a 2'-deoxyadenosine in double-stranded DNA + glyoxal + succinate + CO2</text>
        <dbReference type="Rhea" id="RHEA:70463"/>
        <dbReference type="Rhea" id="RHEA-COMP:17897"/>
        <dbReference type="Rhea" id="RHEA-COMP:17903"/>
        <dbReference type="ChEBI" id="CHEBI:15377"/>
        <dbReference type="ChEBI" id="CHEBI:15379"/>
        <dbReference type="ChEBI" id="CHEBI:16526"/>
        <dbReference type="ChEBI" id="CHEBI:16810"/>
        <dbReference type="ChEBI" id="CHEBI:30031"/>
        <dbReference type="ChEBI" id="CHEBI:34779"/>
        <dbReference type="ChEBI" id="CHEBI:90615"/>
        <dbReference type="ChEBI" id="CHEBI:189583"/>
    </reaction>
    <physiologicalReaction direction="left-to-right" evidence="22">
        <dbReference type="Rhea" id="RHEA:70464"/>
    </physiologicalReaction>
</comment>
<comment type="catalytic activity">
    <reaction evidence="12">
        <text>a 1,N(6)-etheno-2'-deoxyadenosine in single-stranded DNA + 2-oxoglutarate + O2 + H2O = a 2'-deoxyadenosine in single-stranded DNA + glyoxal + succinate + CO2</text>
        <dbReference type="Rhea" id="RHEA:70459"/>
        <dbReference type="Rhea" id="RHEA-COMP:17896"/>
        <dbReference type="Rhea" id="RHEA-COMP:17904"/>
        <dbReference type="ChEBI" id="CHEBI:15377"/>
        <dbReference type="ChEBI" id="CHEBI:15379"/>
        <dbReference type="ChEBI" id="CHEBI:16526"/>
        <dbReference type="ChEBI" id="CHEBI:16810"/>
        <dbReference type="ChEBI" id="CHEBI:30031"/>
        <dbReference type="ChEBI" id="CHEBI:34779"/>
        <dbReference type="ChEBI" id="CHEBI:90615"/>
        <dbReference type="ChEBI" id="CHEBI:189583"/>
    </reaction>
    <physiologicalReaction direction="left-to-right" evidence="22">
        <dbReference type="Rhea" id="RHEA:70460"/>
    </physiologicalReaction>
</comment>
<comment type="catalytic activity">
    <reaction evidence="12">
        <text>a 3,N(4)-etheno-2'-deoxycytidine in double-stranded DNA + 2-oxoglutarate + O2 + H2O = a 2'-deoxycytidine in double-stranded DNA + glyoxal + succinate + CO2</text>
        <dbReference type="Rhea" id="RHEA:70467"/>
        <dbReference type="Rhea" id="RHEA-COMP:17070"/>
        <dbReference type="Rhea" id="RHEA-COMP:17905"/>
        <dbReference type="ChEBI" id="CHEBI:15377"/>
        <dbReference type="ChEBI" id="CHEBI:15379"/>
        <dbReference type="ChEBI" id="CHEBI:16526"/>
        <dbReference type="ChEBI" id="CHEBI:16810"/>
        <dbReference type="ChEBI" id="CHEBI:30031"/>
        <dbReference type="ChEBI" id="CHEBI:34779"/>
        <dbReference type="ChEBI" id="CHEBI:85452"/>
        <dbReference type="ChEBI" id="CHEBI:189585"/>
    </reaction>
    <physiologicalReaction direction="left-to-right" evidence="22">
        <dbReference type="Rhea" id="RHEA:70468"/>
    </physiologicalReaction>
</comment>
<comment type="catalytic activity">
    <reaction evidence="12">
        <text>a 3,N(4)-etheno-2'-deoxycytidine in single-stranded DNA + 2-oxoglutarate + O2 + H2O = a 2'-deoxycytidine in single-stranded DNA + glyoxal + succinate + CO2</text>
        <dbReference type="Rhea" id="RHEA:70471"/>
        <dbReference type="Rhea" id="RHEA-COMP:12846"/>
        <dbReference type="Rhea" id="RHEA-COMP:17906"/>
        <dbReference type="ChEBI" id="CHEBI:15377"/>
        <dbReference type="ChEBI" id="CHEBI:15379"/>
        <dbReference type="ChEBI" id="CHEBI:16526"/>
        <dbReference type="ChEBI" id="CHEBI:16810"/>
        <dbReference type="ChEBI" id="CHEBI:30031"/>
        <dbReference type="ChEBI" id="CHEBI:34779"/>
        <dbReference type="ChEBI" id="CHEBI:85452"/>
        <dbReference type="ChEBI" id="CHEBI:189585"/>
    </reaction>
    <physiologicalReaction direction="left-to-right" evidence="22">
        <dbReference type="Rhea" id="RHEA:70472"/>
    </physiologicalReaction>
</comment>
<comment type="catalytic activity">
    <reaction evidence="12">
        <text>a 1,N(2)-etheno-2'-deoxyguanosine in double-stranded DNA + 2-oxoglutarate + O2 + H2O = a 2'-deoxyguanosine in double-stranded DNA + glyoxal + succinate + CO2</text>
        <dbReference type="Rhea" id="RHEA:70487"/>
        <dbReference type="Rhea" id="RHEA-COMP:17910"/>
        <dbReference type="Rhea" id="RHEA-COMP:17912"/>
        <dbReference type="ChEBI" id="CHEBI:15377"/>
        <dbReference type="ChEBI" id="CHEBI:15379"/>
        <dbReference type="ChEBI" id="CHEBI:16526"/>
        <dbReference type="ChEBI" id="CHEBI:16810"/>
        <dbReference type="ChEBI" id="CHEBI:30031"/>
        <dbReference type="ChEBI" id="CHEBI:34779"/>
        <dbReference type="ChEBI" id="CHEBI:85445"/>
        <dbReference type="ChEBI" id="CHEBI:189586"/>
    </reaction>
    <physiologicalReaction direction="left-to-right" evidence="22">
        <dbReference type="Rhea" id="RHEA:70488"/>
    </physiologicalReaction>
</comment>
<comment type="cofactor">
    <cofactor evidence="1 6 7">
        <name>Fe(2+)</name>
        <dbReference type="ChEBI" id="CHEBI:29033"/>
    </cofactor>
    <text evidence="1 6 7">Binds 1 Fe(2+) ion per subunit.</text>
</comment>
<comment type="activity regulation">
    <text evidence="3 7">Activated by ascorbate and magnesium ions.</text>
</comment>
<comment type="biophysicochemical properties">
    <kinetics>
        <KM evidence="5">183 nM for N(1)-methyl-2'-deoxyadenosine in single-stranded DNA</KM>
        <KM evidence="5">320 nM for N(1)-methyl-2'-deoxyadenosine in double-stranded DNA</KM>
        <KM evidence="5">82.2 nM for N(3)-methyl-2'-deoxycytidine in single-stranded DNA</KM>
        <KM evidence="5">167 nM for N(3)-methyl-2'-deoxycytidine in double-stranded DNA</KM>
    </kinetics>
</comment>
<comment type="subunit">
    <text evidence="8 11 13">Interacts with PCNA homotrimer; this interaction is enhanced during the S-phase of the cell cycle (PubMed:19736315, PubMed:23972994, PubMed:26408825). Interacts with nucleolar proteins NCL, UBTF and NPM1 (PubMed:23972994). Interacts with XRCC5-XRCC6 heterodimer (PubMed:23972994).</text>
</comment>
<comment type="interaction">
    <interactant intactId="EBI-2371780">
        <id>Q6NS38</id>
    </interactant>
    <interactant intactId="EBI-618309">
        <id>Q08379</id>
        <label>GOLGA2</label>
    </interactant>
    <organismsDiffer>false</organismsDiffer>
    <experiments>3</experiments>
</comment>
<comment type="subcellular location">
    <subcellularLocation>
        <location evidence="3 4 8">Nucleus</location>
    </subcellularLocation>
    <subcellularLocation>
        <location evidence="11">Nucleus</location>
        <location evidence="11">Nucleolus</location>
    </subcellularLocation>
    <subcellularLocation>
        <location evidence="11">Nucleus</location>
        <location evidence="11">Nucleoplasm</location>
    </subcellularLocation>
    <text evidence="4">Relocates to the replication foci during S-phase.</text>
</comment>
<comment type="alternative products">
    <event type="alternative splicing"/>
    <isoform>
        <id>Q6NS38-1</id>
        <name>1</name>
        <sequence type="displayed"/>
    </isoform>
    <isoform>
        <id>Q6NS38-2</id>
        <name>2</name>
        <sequence type="described" ref="VSP_042923"/>
    </isoform>
</comment>
<comment type="tissue specificity">
    <text evidence="3 5">Detected in colon, small intestine, ovary, testis, prostate, skeletal muscle, heart, liver and urinary bladder.</text>
</comment>
<comment type="domain">
    <text evidence="8">The PCNA-binding motif (AlkB homolog 2 PCNA-interacting motif, APIM), mediates the colocalization of ALKBH2 with PCNA at the replication foci, coordinating the repair of alkylated DNA damage with DNA replication.</text>
</comment>
<comment type="similarity">
    <text evidence="16">Belongs to the alkB family.</text>
</comment>
<feature type="chain" id="PRO_0000239275" description="DNA oxidative demethylase ALKBH2">
    <location>
        <begin position="1"/>
        <end position="261"/>
    </location>
</feature>
<feature type="domain" description="Fe2OG dioxygenase" evidence="1">
    <location>
        <begin position="152"/>
        <end position="257"/>
    </location>
</feature>
<feature type="region of interest" description="Disordered" evidence="2">
    <location>
        <begin position="1"/>
        <end position="57"/>
    </location>
</feature>
<feature type="short sequence motif" description="PCNA-binding" evidence="8">
    <location>
        <begin position="3"/>
        <end position="7"/>
    </location>
</feature>
<feature type="binding site" evidence="6">
    <location>
        <begin position="102"/>
        <end position="104"/>
    </location>
    <ligand>
        <name>substrate</name>
    </ligand>
</feature>
<feature type="binding site" evidence="6">
    <location>
        <begin position="122"/>
        <end position="124"/>
    </location>
    <ligand>
        <name>substrate</name>
    </ligand>
</feature>
<feature type="binding site" evidence="6 10">
    <location>
        <position position="159"/>
    </location>
    <ligand>
        <name>2-oxoglutarate</name>
        <dbReference type="ChEBI" id="CHEBI:16810"/>
    </ligand>
</feature>
<feature type="binding site" evidence="6 10">
    <location>
        <position position="161"/>
    </location>
    <ligand>
        <name>2-oxoglutarate</name>
        <dbReference type="ChEBI" id="CHEBI:16810"/>
    </ligand>
</feature>
<feature type="binding site" evidence="6">
    <location>
        <position position="171"/>
    </location>
    <ligand>
        <name>2-oxoglutarate</name>
        <dbReference type="ChEBI" id="CHEBI:16810"/>
    </ligand>
</feature>
<feature type="binding site" evidence="6">
    <location>
        <position position="171"/>
    </location>
    <ligand>
        <name>Fe cation</name>
        <dbReference type="ChEBI" id="CHEBI:24875"/>
        <note>catalytic</note>
    </ligand>
</feature>
<feature type="binding site" evidence="6">
    <location>
        <position position="173"/>
    </location>
    <ligand>
        <name>Fe cation</name>
        <dbReference type="ChEBI" id="CHEBI:24875"/>
        <note>catalytic</note>
    </ligand>
</feature>
<feature type="binding site" evidence="6">
    <location>
        <position position="174"/>
    </location>
    <ligand>
        <name>substrate</name>
    </ligand>
</feature>
<feature type="binding site" evidence="6">
    <location>
        <position position="236"/>
    </location>
    <ligand>
        <name>2-oxoglutarate</name>
        <dbReference type="ChEBI" id="CHEBI:16810"/>
    </ligand>
</feature>
<feature type="binding site" evidence="6">
    <location>
        <position position="236"/>
    </location>
    <ligand>
        <name>Fe cation</name>
        <dbReference type="ChEBI" id="CHEBI:24875"/>
        <note>catalytic</note>
    </ligand>
</feature>
<feature type="binding site" evidence="6 10">
    <location>
        <position position="248"/>
    </location>
    <ligand>
        <name>2-oxoglutarate</name>
        <dbReference type="ChEBI" id="CHEBI:16810"/>
    </ligand>
</feature>
<feature type="binding site" evidence="10">
    <location>
        <position position="252"/>
    </location>
    <ligand>
        <name>2-oxoglutarate</name>
        <dbReference type="ChEBI" id="CHEBI:16810"/>
    </ligand>
</feature>
<feature type="binding site" evidence="6 10">
    <location>
        <position position="254"/>
    </location>
    <ligand>
        <name>2-oxoglutarate</name>
        <dbReference type="ChEBI" id="CHEBI:16810"/>
    </ligand>
</feature>
<feature type="splice variant" id="VSP_042923" description="In isoform 2." evidence="15">
    <original>ALARVQVFGKWHSVPRKQATYGDAGLTYTFSGLTLSPKPWIPVLERIRDHVSGVTGQTFNFVLINRYKDGCDHIGEHRDDERELAPGSPIASVSFGACRDFVFRHKDSRGKSPSRRVAVVRLPLAHGSLLMMNHPTNTHWYHSLPVRKKVLAPRVNLTFRKILLTKK</original>
    <variation>IKMAVTTSGSTEMMKENWPLGAPLPLSPSVPAETLSSGIRIPVGKAPPGGWRWSGCRWPTGAY</variation>
    <location>
        <begin position="95"/>
        <end position="261"/>
    </location>
</feature>
<feature type="sequence variant" id="VAR_086049" description="Found in a patient with endometrial cancer; slightly decreased PCNA-binding." evidence="13">
    <original>A</original>
    <variation>V</variation>
    <location>
        <position position="9"/>
    </location>
</feature>
<feature type="sequence variant" id="VAR_086050" description="Increased PCNA-binding; dbSNP:rs138073204." evidence="13">
    <original>Q</original>
    <variation>K</variation>
    <location>
        <position position="10"/>
    </location>
</feature>
<feature type="sequence variant" id="VAR_048223" description="In dbSNP:rs33962311.">
    <original>R</original>
    <variation>H</variation>
    <location>
        <position position="203"/>
    </location>
</feature>
<feature type="mutagenesis site" description="Impairs PCNA-binding. No effect on PCNA-binding; when associated with R-7." evidence="8">
    <original>R</original>
    <variation>K</variation>
    <location>
        <position position="3"/>
    </location>
</feature>
<feature type="mutagenesis site" description="Complete loss of PCNA-binding." evidence="8 13">
    <original>F</original>
    <variation>A</variation>
    <location>
        <position position="4"/>
    </location>
</feature>
<feature type="mutagenesis site" description="No effect on PCNA-binding." evidence="8">
    <original>F</original>
    <variation>Y</variation>
    <location>
        <position position="4"/>
    </location>
</feature>
<feature type="mutagenesis site" description="Strong decrease in PCNA-binding." evidence="8">
    <original>LV</original>
    <variation>AA</variation>
    <location>
        <begin position="5"/>
        <end position="6"/>
    </location>
</feature>
<feature type="mutagenesis site" description="No effect on PCNA-binding; when associated with K-3." evidence="8">
    <original>K</original>
    <variation>R</variation>
    <location>
        <position position="7"/>
    </location>
</feature>
<feature type="mutagenesis site" description="Leads to cytoplasmic relocalization." evidence="11">
    <original>RKR</original>
    <variation>AAA</variation>
    <location>
        <begin position="38"/>
        <end position="40"/>
    </location>
</feature>
<feature type="mutagenesis site" description="Strong decrease of activity toward N1-methyladenine adduct in both ssDNA and dsDNA substrates." evidence="9">
    <original>VFG</original>
    <variation>RED</variation>
    <location>
        <begin position="101"/>
        <end position="103"/>
    </location>
</feature>
<feature type="mutagenesis site" description="Decreases activity toward N1-methyladenine adduct in ssDNA. Has no effect on lesion repair in dsDNA." evidence="9">
    <original>V</original>
    <variation>A</variation>
    <location>
        <position position="101"/>
    </location>
</feature>
<feature type="mutagenesis site" description="Loss of activity toward N1-methyladenine adduct in either ssDNA or dsDNA; when associated with A-102." evidence="10">
    <original>V</original>
    <variation>G</variation>
    <location>
        <position position="101"/>
    </location>
</feature>
<feature type="mutagenesis site" description="Strong decrease of activity toward N1-methyladenine adduct. Loss of activity toward N1-methyladenine adduct in either ssDNA or dsDNA; when associated with G-101." evidence="9 10">
    <original>F</original>
    <variation>A</variation>
    <location>
        <position position="102"/>
    </location>
</feature>
<feature type="mutagenesis site" description="Loss of activity toward N1-methyladenine adduct in either ssDNA or dsDNA." evidence="9">
    <original>R</original>
    <variation>A</variation>
    <location>
        <position position="110"/>
    </location>
</feature>
<feature type="mutagenesis site" description="Decreases activity toward N1-methyladenine adduct in either ssDNA or dsDNA." evidence="9">
    <original>Y</original>
    <variation>A</variation>
    <location>
        <position position="122"/>
    </location>
</feature>
<feature type="mutagenesis site" description="Loss of activity toward N1-methyladenine adduct in either ssDNA or dsDNA." evidence="9">
    <original>F</original>
    <variation>A</variation>
    <location>
        <position position="124"/>
    </location>
</feature>
<feature type="mutagenesis site" description="Strong decrease of activity toward N1-methyladenine adduct in ssDNA. Has no effect on lesion repair in dsDNA." evidence="9">
    <original>S</original>
    <variation>A</variation>
    <location>
        <position position="125"/>
    </location>
</feature>
<feature type="mutagenesis site" description="Loss of activity associated with decreased rDNA transcription." evidence="5 11">
    <original>D</original>
    <variation>A</variation>
    <location>
        <position position="173"/>
    </location>
</feature>
<feature type="mutagenesis site" description="Loss of activity." evidence="9">
    <original>E</original>
    <variation>A</variation>
    <location>
        <position position="175"/>
    </location>
</feature>
<feature type="mutagenesis site" description="Decreases activity." evidence="5">
    <original>H</original>
    <variation>A</variation>
    <location>
        <position position="236"/>
    </location>
</feature>
<feature type="sequence conflict" description="In Ref. 1; AAV28301." evidence="16" ref="1">
    <original>R</original>
    <variation>G</variation>
    <location>
        <position position="43"/>
    </location>
</feature>
<feature type="strand" evidence="24">
    <location>
        <begin position="58"/>
        <end position="62"/>
    </location>
</feature>
<feature type="strand" evidence="24">
    <location>
        <begin position="65"/>
        <end position="71"/>
    </location>
</feature>
<feature type="helix" evidence="24">
    <location>
        <begin position="75"/>
        <end position="88"/>
    </location>
</feature>
<feature type="helix" evidence="24">
    <location>
        <begin position="94"/>
        <end position="97"/>
    </location>
</feature>
<feature type="strand" evidence="24">
    <location>
        <begin position="98"/>
        <end position="101"/>
    </location>
</feature>
<feature type="strand" evidence="24">
    <location>
        <begin position="104"/>
        <end position="107"/>
    </location>
</feature>
<feature type="strand" evidence="24">
    <location>
        <begin position="109"/>
        <end position="116"/>
    </location>
</feature>
<feature type="strand" evidence="24">
    <location>
        <begin position="122"/>
        <end position="124"/>
    </location>
</feature>
<feature type="strand" evidence="24">
    <location>
        <begin position="127"/>
        <end position="129"/>
    </location>
</feature>
<feature type="helix" evidence="24">
    <location>
        <begin position="136"/>
        <end position="149"/>
    </location>
</feature>
<feature type="strand" evidence="24">
    <location>
        <begin position="154"/>
        <end position="163"/>
    </location>
</feature>
<feature type="strand" evidence="24">
    <location>
        <begin position="168"/>
        <end position="171"/>
    </location>
</feature>
<feature type="strand" evidence="23">
    <location>
        <begin position="176"/>
        <end position="178"/>
    </location>
</feature>
<feature type="strand" evidence="24">
    <location>
        <begin position="184"/>
        <end position="191"/>
    </location>
</feature>
<feature type="strand" evidence="24">
    <location>
        <begin position="193"/>
        <end position="199"/>
    </location>
</feature>
<feature type="helix" evidence="24">
    <location>
        <begin position="200"/>
        <end position="202"/>
    </location>
</feature>
<feature type="strand" evidence="24">
    <location>
        <begin position="204"/>
        <end position="206"/>
    </location>
</feature>
<feature type="strand" evidence="24">
    <location>
        <begin position="214"/>
        <end position="218"/>
    </location>
</feature>
<feature type="strand" evidence="24">
    <location>
        <begin position="222"/>
        <end position="227"/>
    </location>
</feature>
<feature type="helix" evidence="24">
    <location>
        <begin position="230"/>
        <end position="233"/>
    </location>
</feature>
<feature type="strand" evidence="24">
    <location>
        <begin position="234"/>
        <end position="238"/>
    </location>
</feature>
<feature type="strand" evidence="24">
    <location>
        <begin position="248"/>
        <end position="254"/>
    </location>
</feature>
<keyword id="KW-0002">3D-structure</keyword>
<keyword id="KW-0025">Alternative splicing</keyword>
<keyword id="KW-0223">Dioxygenase</keyword>
<keyword id="KW-0227">DNA damage</keyword>
<keyword id="KW-0234">DNA repair</keyword>
<keyword id="KW-0408">Iron</keyword>
<keyword id="KW-0460">Magnesium</keyword>
<keyword id="KW-0479">Metal-binding</keyword>
<keyword id="KW-0539">Nucleus</keyword>
<keyword id="KW-0560">Oxidoreductase</keyword>
<keyword id="KW-1267">Proteomics identification</keyword>
<keyword id="KW-1185">Reference proteome</keyword>
<dbReference type="EC" id="1.14.11.33" evidence="3 5 6 9 10"/>
<dbReference type="EMBL" id="AY754389">
    <property type="protein sequence ID" value="AAV28301.1"/>
    <property type="molecule type" value="mRNA"/>
</dbReference>
<dbReference type="EMBL" id="AB277859">
    <property type="protein sequence ID" value="BAF56576.1"/>
    <property type="molecule type" value="mRNA"/>
</dbReference>
<dbReference type="EMBL" id="AC011596">
    <property type="status" value="NOT_ANNOTATED_CDS"/>
    <property type="molecule type" value="Genomic_DNA"/>
</dbReference>
<dbReference type="EMBL" id="BC070489">
    <property type="protein sequence ID" value="AAH70489.1"/>
    <property type="molecule type" value="mRNA"/>
</dbReference>
<dbReference type="CCDS" id="CCDS31897.1">
    <molecule id="Q6NS38-1"/>
</dbReference>
<dbReference type="CCDS" id="CCDS55883.1">
    <molecule id="Q6NS38-2"/>
</dbReference>
<dbReference type="RefSeq" id="NP_001001655.1">
    <molecule id="Q6NS38-1"/>
    <property type="nucleotide sequence ID" value="NM_001001655.3"/>
</dbReference>
<dbReference type="RefSeq" id="NP_001138846.1">
    <molecule id="Q6NS38-1"/>
    <property type="nucleotide sequence ID" value="NM_001145374.2"/>
</dbReference>
<dbReference type="RefSeq" id="NP_001138847.1">
    <molecule id="Q6NS38-1"/>
    <property type="nucleotide sequence ID" value="NM_001145375.2"/>
</dbReference>
<dbReference type="RefSeq" id="NP_001192108.1">
    <molecule id="Q6NS38-2"/>
    <property type="nucleotide sequence ID" value="NM_001205179.2"/>
</dbReference>
<dbReference type="RefSeq" id="NP_001192109.1">
    <molecule id="Q6NS38-2"/>
    <property type="nucleotide sequence ID" value="NM_001205180.2"/>
</dbReference>
<dbReference type="RefSeq" id="XP_005253892.1">
    <molecule id="Q6NS38-1"/>
    <property type="nucleotide sequence ID" value="XM_005253835.6"/>
</dbReference>
<dbReference type="RefSeq" id="XP_005253893.1">
    <molecule id="Q6NS38-2"/>
    <property type="nucleotide sequence ID" value="XM_005253836.2"/>
</dbReference>
<dbReference type="RefSeq" id="XP_047284265.1">
    <molecule id="Q6NS38-2"/>
    <property type="nucleotide sequence ID" value="XM_047428309.1"/>
</dbReference>
<dbReference type="RefSeq" id="XP_054227093.1">
    <molecule id="Q6NS38-1"/>
    <property type="nucleotide sequence ID" value="XM_054371118.1"/>
</dbReference>
<dbReference type="RefSeq" id="XP_054227094.1">
    <molecule id="Q6NS38-2"/>
    <property type="nucleotide sequence ID" value="XM_054371119.1"/>
</dbReference>
<dbReference type="RefSeq" id="XP_054227095.1">
    <molecule id="Q6NS38-2"/>
    <property type="nucleotide sequence ID" value="XM_054371120.1"/>
</dbReference>
<dbReference type="PDB" id="3BTX">
    <property type="method" value="X-ray"/>
    <property type="resolution" value="2.00 A"/>
    <property type="chains" value="A=56-258"/>
</dbReference>
<dbReference type="PDB" id="3BTY">
    <property type="method" value="X-ray"/>
    <property type="resolution" value="2.35 A"/>
    <property type="chains" value="A=56-258"/>
</dbReference>
<dbReference type="PDB" id="3BTZ">
    <property type="method" value="X-ray"/>
    <property type="resolution" value="3.00 A"/>
    <property type="chains" value="A=57-258"/>
</dbReference>
<dbReference type="PDB" id="3BU0">
    <property type="method" value="X-ray"/>
    <property type="resolution" value="2.50 A"/>
    <property type="chains" value="A=56-258"/>
</dbReference>
<dbReference type="PDB" id="3BUC">
    <property type="method" value="X-ray"/>
    <property type="resolution" value="2.59 A"/>
    <property type="chains" value="A=56-258"/>
</dbReference>
<dbReference type="PDB" id="3H8O">
    <property type="method" value="X-ray"/>
    <property type="resolution" value="2.50 A"/>
    <property type="chains" value="A=56-261"/>
</dbReference>
<dbReference type="PDB" id="3H8R">
    <property type="method" value="X-ray"/>
    <property type="resolution" value="1.77 A"/>
    <property type="chains" value="A=56-261"/>
</dbReference>
<dbReference type="PDB" id="3H8X">
    <property type="method" value="X-ray"/>
    <property type="resolution" value="2.50 A"/>
    <property type="chains" value="A=56-261"/>
</dbReference>
<dbReference type="PDB" id="3RZG">
    <property type="method" value="X-ray"/>
    <property type="resolution" value="1.62 A"/>
    <property type="chains" value="A=56-261"/>
</dbReference>
<dbReference type="PDB" id="3RZH">
    <property type="method" value="X-ray"/>
    <property type="resolution" value="2.25 A"/>
    <property type="chains" value="A=56-261"/>
</dbReference>
<dbReference type="PDB" id="3RZJ">
    <property type="method" value="X-ray"/>
    <property type="resolution" value="2.50 A"/>
    <property type="chains" value="A=56-261"/>
</dbReference>
<dbReference type="PDB" id="3RZK">
    <property type="method" value="X-ray"/>
    <property type="resolution" value="2.78 A"/>
    <property type="chains" value="A=56-261"/>
</dbReference>
<dbReference type="PDB" id="3RZL">
    <property type="method" value="X-ray"/>
    <property type="resolution" value="2.60 A"/>
    <property type="chains" value="A/D=56-261"/>
</dbReference>
<dbReference type="PDB" id="3RZM">
    <property type="method" value="X-ray"/>
    <property type="resolution" value="3.06 A"/>
    <property type="chains" value="A=56-260"/>
</dbReference>
<dbReference type="PDB" id="3S57">
    <property type="method" value="X-ray"/>
    <property type="resolution" value="1.60 A"/>
    <property type="chains" value="A=56-258"/>
</dbReference>
<dbReference type="PDB" id="3S5A">
    <property type="method" value="X-ray"/>
    <property type="resolution" value="1.70 A"/>
    <property type="chains" value="A=56-258"/>
</dbReference>
<dbReference type="PDB" id="4MG2">
    <property type="method" value="X-ray"/>
    <property type="resolution" value="2.30 A"/>
    <property type="chains" value="A=56-258"/>
</dbReference>
<dbReference type="PDB" id="4MGT">
    <property type="method" value="X-ray"/>
    <property type="resolution" value="2.60 A"/>
    <property type="chains" value="A=56-258"/>
</dbReference>
<dbReference type="PDBsum" id="3BTX"/>
<dbReference type="PDBsum" id="3BTY"/>
<dbReference type="PDBsum" id="3BTZ"/>
<dbReference type="PDBsum" id="3BU0"/>
<dbReference type="PDBsum" id="3BUC"/>
<dbReference type="PDBsum" id="3H8O"/>
<dbReference type="PDBsum" id="3H8R"/>
<dbReference type="PDBsum" id="3H8X"/>
<dbReference type="PDBsum" id="3RZG"/>
<dbReference type="PDBsum" id="3RZH"/>
<dbReference type="PDBsum" id="3RZJ"/>
<dbReference type="PDBsum" id="3RZK"/>
<dbReference type="PDBsum" id="3RZL"/>
<dbReference type="PDBsum" id="3RZM"/>
<dbReference type="PDBsum" id="3S57"/>
<dbReference type="PDBsum" id="3S5A"/>
<dbReference type="PDBsum" id="4MG2"/>
<dbReference type="PDBsum" id="4MGT"/>
<dbReference type="SMR" id="Q6NS38"/>
<dbReference type="BioGRID" id="125741">
    <property type="interactions" value="22"/>
</dbReference>
<dbReference type="FunCoup" id="Q6NS38">
    <property type="interactions" value="1687"/>
</dbReference>
<dbReference type="IntAct" id="Q6NS38">
    <property type="interactions" value="14"/>
</dbReference>
<dbReference type="STRING" id="9606.ENSP00000398181"/>
<dbReference type="BindingDB" id="Q6NS38"/>
<dbReference type="ChEMBL" id="CHEMBL5169164"/>
<dbReference type="DrugBank" id="DB00126">
    <property type="generic name" value="Ascorbic acid"/>
</dbReference>
<dbReference type="iPTMnet" id="Q6NS38"/>
<dbReference type="PhosphoSitePlus" id="Q6NS38"/>
<dbReference type="SwissPalm" id="Q6NS38"/>
<dbReference type="BioMuta" id="ALKBH2"/>
<dbReference type="DMDM" id="74736661"/>
<dbReference type="jPOST" id="Q6NS38"/>
<dbReference type="MassIVE" id="Q6NS38"/>
<dbReference type="PaxDb" id="9606-ENSP00000398181"/>
<dbReference type="PeptideAtlas" id="Q6NS38"/>
<dbReference type="ProteomicsDB" id="66621">
    <molecule id="Q6NS38-1"/>
</dbReference>
<dbReference type="ProteomicsDB" id="66622">
    <molecule id="Q6NS38-2"/>
</dbReference>
<dbReference type="Pumba" id="Q6NS38"/>
<dbReference type="Antibodypedia" id="4403">
    <property type="antibodies" value="143 antibodies from 30 providers"/>
</dbReference>
<dbReference type="DNASU" id="121642"/>
<dbReference type="Ensembl" id="ENST00000343075.7">
    <molecule id="Q6NS38-1"/>
    <property type="protein sequence ID" value="ENSP00000343021.3"/>
    <property type="gene ID" value="ENSG00000189046.11"/>
</dbReference>
<dbReference type="Ensembl" id="ENST00000429722.3">
    <molecule id="Q6NS38-1"/>
    <property type="protein sequence ID" value="ENSP00000398181.1"/>
    <property type="gene ID" value="ENSG00000189046.11"/>
</dbReference>
<dbReference type="Ensembl" id="ENST00000440112.2">
    <molecule id="Q6NS38-2"/>
    <property type="protein sequence ID" value="ENSP00000399820.2"/>
    <property type="gene ID" value="ENSG00000189046.11"/>
</dbReference>
<dbReference type="Ensembl" id="ENST00000619381.4">
    <molecule id="Q6NS38-2"/>
    <property type="protein sequence ID" value="ENSP00000478765.1"/>
    <property type="gene ID" value="ENSG00000189046.11"/>
</dbReference>
<dbReference type="GeneID" id="121642"/>
<dbReference type="KEGG" id="hsa:121642"/>
<dbReference type="MANE-Select" id="ENST00000429722.3">
    <property type="protein sequence ID" value="ENSP00000398181.1"/>
    <property type="RefSeq nucleotide sequence ID" value="NM_001145374.2"/>
    <property type="RefSeq protein sequence ID" value="NP_001138846.1"/>
</dbReference>
<dbReference type="UCSC" id="uc001tnx.3">
    <molecule id="Q6NS38-1"/>
    <property type="organism name" value="human"/>
</dbReference>
<dbReference type="AGR" id="HGNC:32487"/>
<dbReference type="CTD" id="121642"/>
<dbReference type="DisGeNET" id="121642"/>
<dbReference type="GeneCards" id="ALKBH2"/>
<dbReference type="HGNC" id="HGNC:32487">
    <property type="gene designation" value="ALKBH2"/>
</dbReference>
<dbReference type="HPA" id="ENSG00000189046">
    <property type="expression patterns" value="Low tissue specificity"/>
</dbReference>
<dbReference type="MIM" id="610602">
    <property type="type" value="gene"/>
</dbReference>
<dbReference type="neXtProt" id="NX_Q6NS38"/>
<dbReference type="OpenTargets" id="ENSG00000189046"/>
<dbReference type="PharmGKB" id="PA143485292"/>
<dbReference type="VEuPathDB" id="HostDB:ENSG00000189046"/>
<dbReference type="eggNOG" id="ENOG502QTDK">
    <property type="taxonomic scope" value="Eukaryota"/>
</dbReference>
<dbReference type="GeneTree" id="ENSGT00940000159009"/>
<dbReference type="HOGENOM" id="CLU_048788_5_0_1"/>
<dbReference type="InParanoid" id="Q6NS38"/>
<dbReference type="OMA" id="TQHHWQH"/>
<dbReference type="OrthoDB" id="445341at2759"/>
<dbReference type="PAN-GO" id="Q6NS38">
    <property type="GO annotations" value="5 GO annotations based on evolutionary models"/>
</dbReference>
<dbReference type="PhylomeDB" id="Q6NS38"/>
<dbReference type="TreeFam" id="TF331732"/>
<dbReference type="BRENDA" id="1.14.11.33">
    <property type="organism ID" value="2681"/>
</dbReference>
<dbReference type="PathwayCommons" id="Q6NS38"/>
<dbReference type="Reactome" id="R-HSA-112122">
    <property type="pathway name" value="ALKBH2 mediated reversal of alkylation damage"/>
</dbReference>
<dbReference type="SignaLink" id="Q6NS38"/>
<dbReference type="BioGRID-ORCS" id="121642">
    <property type="hits" value="7 hits in 1158 CRISPR screens"/>
</dbReference>
<dbReference type="ChiTaRS" id="ALKBH2">
    <property type="organism name" value="human"/>
</dbReference>
<dbReference type="EvolutionaryTrace" id="Q6NS38"/>
<dbReference type="GenomeRNAi" id="121642"/>
<dbReference type="Pharos" id="Q6NS38">
    <property type="development level" value="Tbio"/>
</dbReference>
<dbReference type="PRO" id="PR:Q6NS38"/>
<dbReference type="Proteomes" id="UP000005640">
    <property type="component" value="Chromosome 12"/>
</dbReference>
<dbReference type="RNAct" id="Q6NS38">
    <property type="molecule type" value="protein"/>
</dbReference>
<dbReference type="Bgee" id="ENSG00000189046">
    <property type="expression patterns" value="Expressed in oocyte and 148 other cell types or tissues"/>
</dbReference>
<dbReference type="ExpressionAtlas" id="Q6NS38">
    <property type="expression patterns" value="baseline and differential"/>
</dbReference>
<dbReference type="GO" id="GO:0005730">
    <property type="term" value="C:nucleolus"/>
    <property type="evidence" value="ECO:0000314"/>
    <property type="project" value="UniProtKB"/>
</dbReference>
<dbReference type="GO" id="GO:0005654">
    <property type="term" value="C:nucleoplasm"/>
    <property type="evidence" value="ECO:0000314"/>
    <property type="project" value="HPA"/>
</dbReference>
<dbReference type="GO" id="GO:0005634">
    <property type="term" value="C:nucleus"/>
    <property type="evidence" value="ECO:0000314"/>
    <property type="project" value="UniProtKB"/>
</dbReference>
<dbReference type="GO" id="GO:0035516">
    <property type="term" value="F:broad specificity oxidative DNA demethylase activity"/>
    <property type="evidence" value="ECO:0000314"/>
    <property type="project" value="UniProtKB"/>
</dbReference>
<dbReference type="GO" id="GO:0051747">
    <property type="term" value="F:cytosine C-5 DNA demethylase activity"/>
    <property type="evidence" value="ECO:0000314"/>
    <property type="project" value="UniProtKB"/>
</dbReference>
<dbReference type="GO" id="GO:0008198">
    <property type="term" value="F:ferrous iron binding"/>
    <property type="evidence" value="ECO:0000314"/>
    <property type="project" value="UniProtKB"/>
</dbReference>
<dbReference type="GO" id="GO:0000182">
    <property type="term" value="F:rDNA binding"/>
    <property type="evidence" value="ECO:0000314"/>
    <property type="project" value="UniProtKB"/>
</dbReference>
<dbReference type="GO" id="GO:0006307">
    <property type="term" value="P:DNA alkylation repair"/>
    <property type="evidence" value="ECO:0000314"/>
    <property type="project" value="UniProtKB"/>
</dbReference>
<dbReference type="FunFam" id="2.60.120.590:FF:000004">
    <property type="entry name" value="DNA oxidative demethylase ALKBH2"/>
    <property type="match status" value="1"/>
</dbReference>
<dbReference type="Gene3D" id="2.60.120.590">
    <property type="entry name" value="Alpha-ketoglutarate-dependent dioxygenase AlkB-like"/>
    <property type="match status" value="1"/>
</dbReference>
<dbReference type="InterPro" id="IPR027450">
    <property type="entry name" value="AlkB-like"/>
</dbReference>
<dbReference type="InterPro" id="IPR037151">
    <property type="entry name" value="AlkB-like_sf"/>
</dbReference>
<dbReference type="InterPro" id="IPR032852">
    <property type="entry name" value="ALKBH2"/>
</dbReference>
<dbReference type="InterPro" id="IPR005123">
    <property type="entry name" value="Oxoglu/Fe-dep_dioxygenase_dom"/>
</dbReference>
<dbReference type="PANTHER" id="PTHR31573">
    <property type="entry name" value="ALPHA-KETOGLUTARATE-DEPENDENT DIOXYGENASE ALKB HOMOLOG 2"/>
    <property type="match status" value="1"/>
</dbReference>
<dbReference type="PANTHER" id="PTHR31573:SF1">
    <property type="entry name" value="DNA OXIDATIVE DEMETHYLASE ALKBH2"/>
    <property type="match status" value="1"/>
</dbReference>
<dbReference type="Pfam" id="PF13532">
    <property type="entry name" value="2OG-FeII_Oxy_2"/>
    <property type="match status" value="1"/>
</dbReference>
<dbReference type="SUPFAM" id="SSF51197">
    <property type="entry name" value="Clavaminate synthase-like"/>
    <property type="match status" value="1"/>
</dbReference>
<dbReference type="PROSITE" id="PS51471">
    <property type="entry name" value="FE2OG_OXY"/>
    <property type="match status" value="1"/>
</dbReference>
<name>ALKB2_HUMAN</name>
<gene>
    <name type="primary">ALKBH2</name>
    <name evidence="14" type="synonym">ABH2</name>
</gene>
<protein>
    <recommendedName>
        <fullName>DNA oxidative demethylase ALKBH2</fullName>
        <ecNumber evidence="3 5 6 9 10">1.14.11.33</ecNumber>
    </recommendedName>
    <alternativeName>
        <fullName>Alkylated DNA repair protein alkB homolog 2</fullName>
    </alternativeName>
    <alternativeName>
        <fullName>Alpha-ketoglutarate-dependent dioxygenase alkB homolog 2</fullName>
    </alternativeName>
    <alternativeName>
        <fullName>Oxy DC1</fullName>
    </alternativeName>
</protein>